<evidence type="ECO:0000250" key="1"/>
<evidence type="ECO:0000305" key="2"/>
<reference key="1">
    <citation type="journal article" date="2002" name="Mol. Biol. Evol.">
        <title>The plastid chromosome of Atropa belladonna and its comparison with that of Nicotiana tabacum: the role of RNA editing in generating divergence in the process of plant speciation.</title>
        <authorList>
            <person name="Schmitz-Linneweber C."/>
            <person name="Regel R."/>
            <person name="Du T.G."/>
            <person name="Hupfer H."/>
            <person name="Herrmann R.G."/>
            <person name="Maier R.M."/>
        </authorList>
    </citation>
    <scope>NUCLEOTIDE SEQUENCE [LARGE SCALE GENOMIC DNA]</scope>
    <source>
        <strain>cv. Ab5p(kan)</strain>
    </source>
</reference>
<accession>Q8S8U3</accession>
<name>RR15_ATRBE</name>
<geneLocation type="chloroplast"/>
<dbReference type="EMBL" id="AJ316582">
    <property type="protein sequence ID" value="CAC88103.1"/>
    <property type="molecule type" value="Genomic_DNA"/>
</dbReference>
<dbReference type="RefSeq" id="NP_783289.1">
    <property type="nucleotide sequence ID" value="NC_004561.1"/>
</dbReference>
<dbReference type="SMR" id="Q8S8U3"/>
<dbReference type="GeneID" id="806542"/>
<dbReference type="GO" id="GO:0009507">
    <property type="term" value="C:chloroplast"/>
    <property type="evidence" value="ECO:0007669"/>
    <property type="project" value="UniProtKB-SubCell"/>
</dbReference>
<dbReference type="GO" id="GO:1990904">
    <property type="term" value="C:ribonucleoprotein complex"/>
    <property type="evidence" value="ECO:0007669"/>
    <property type="project" value="UniProtKB-KW"/>
</dbReference>
<dbReference type="GO" id="GO:0005840">
    <property type="term" value="C:ribosome"/>
    <property type="evidence" value="ECO:0007669"/>
    <property type="project" value="UniProtKB-KW"/>
</dbReference>
<dbReference type="GO" id="GO:0003735">
    <property type="term" value="F:structural constituent of ribosome"/>
    <property type="evidence" value="ECO:0007669"/>
    <property type="project" value="InterPro"/>
</dbReference>
<dbReference type="GO" id="GO:0006412">
    <property type="term" value="P:translation"/>
    <property type="evidence" value="ECO:0007669"/>
    <property type="project" value="UniProtKB-UniRule"/>
</dbReference>
<dbReference type="CDD" id="cd00353">
    <property type="entry name" value="Ribosomal_S15p_S13e"/>
    <property type="match status" value="1"/>
</dbReference>
<dbReference type="Gene3D" id="1.10.287.10">
    <property type="entry name" value="S15/NS1, RNA-binding"/>
    <property type="match status" value="1"/>
</dbReference>
<dbReference type="HAMAP" id="MF_01343_B">
    <property type="entry name" value="Ribosomal_uS15_B"/>
    <property type="match status" value="1"/>
</dbReference>
<dbReference type="InterPro" id="IPR000589">
    <property type="entry name" value="Ribosomal_uS15"/>
</dbReference>
<dbReference type="InterPro" id="IPR005290">
    <property type="entry name" value="Ribosomal_uS15_bac-type"/>
</dbReference>
<dbReference type="InterPro" id="IPR009068">
    <property type="entry name" value="uS15_NS1_RNA-bd_sf"/>
</dbReference>
<dbReference type="NCBIfam" id="TIGR00952">
    <property type="entry name" value="S15_bact"/>
    <property type="match status" value="1"/>
</dbReference>
<dbReference type="PANTHER" id="PTHR23321">
    <property type="entry name" value="RIBOSOMAL PROTEIN S15, BACTERIAL AND ORGANELLAR"/>
    <property type="match status" value="1"/>
</dbReference>
<dbReference type="PANTHER" id="PTHR23321:SF26">
    <property type="entry name" value="SMALL RIBOSOMAL SUBUNIT PROTEIN US15M"/>
    <property type="match status" value="1"/>
</dbReference>
<dbReference type="Pfam" id="PF00312">
    <property type="entry name" value="Ribosomal_S15"/>
    <property type="match status" value="1"/>
</dbReference>
<dbReference type="SMART" id="SM01387">
    <property type="entry name" value="Ribosomal_S15"/>
    <property type="match status" value="1"/>
</dbReference>
<dbReference type="SUPFAM" id="SSF47060">
    <property type="entry name" value="S15/NS1 RNA-binding domain"/>
    <property type="match status" value="1"/>
</dbReference>
<dbReference type="PROSITE" id="PS00362">
    <property type="entry name" value="RIBOSOMAL_S15"/>
    <property type="match status" value="1"/>
</dbReference>
<protein>
    <recommendedName>
        <fullName evidence="2">Small ribosomal subunit protein uS15c</fullName>
    </recommendedName>
    <alternativeName>
        <fullName>30S ribosomal protein S15, chloroplastic</fullName>
    </alternativeName>
</protein>
<organism>
    <name type="scientific">Atropa belladonna</name>
    <name type="common">Belladonna</name>
    <name type="synonym">Deadly nightshade</name>
    <dbReference type="NCBI Taxonomy" id="33113"/>
    <lineage>
        <taxon>Eukaryota</taxon>
        <taxon>Viridiplantae</taxon>
        <taxon>Streptophyta</taxon>
        <taxon>Embryophyta</taxon>
        <taxon>Tracheophyta</taxon>
        <taxon>Spermatophyta</taxon>
        <taxon>Magnoliopsida</taxon>
        <taxon>eudicotyledons</taxon>
        <taxon>Gunneridae</taxon>
        <taxon>Pentapetalae</taxon>
        <taxon>asterids</taxon>
        <taxon>lamiids</taxon>
        <taxon>Solanales</taxon>
        <taxon>Solanaceae</taxon>
        <taxon>Solanoideae</taxon>
        <taxon>Hyoscyameae</taxon>
        <taxon>Atropa</taxon>
    </lineage>
</organism>
<keyword id="KW-0150">Chloroplast</keyword>
<keyword id="KW-0934">Plastid</keyword>
<keyword id="KW-0687">Ribonucleoprotein</keyword>
<keyword id="KW-0689">Ribosomal protein</keyword>
<proteinExistence type="inferred from homology"/>
<feature type="chain" id="PRO_0000115629" description="Small ribosomal subunit protein uS15c">
    <location>
        <begin position="1"/>
        <end position="87"/>
    </location>
</feature>
<gene>
    <name type="primary">rps15</name>
</gene>
<sequence>MVKNSVISIIFQEEKRGSVEFQVFNFTNKIRRLTSHLELHKKDYLSQRGLKKILGKRQRLLAYLAKKNRVRYKELINQLDIRETKTR</sequence>
<comment type="subunit">
    <text evidence="1">Part of the 30S ribosomal subunit.</text>
</comment>
<comment type="subcellular location">
    <subcellularLocation>
        <location>Plastid</location>
        <location>Chloroplast</location>
    </subcellularLocation>
</comment>
<comment type="similarity">
    <text evidence="2">Belongs to the universal ribosomal protein uS15 family.</text>
</comment>